<comment type="function">
    <text evidence="1">Succinyl-CoA synthetase functions in the citric acid cycle (TCA), coupling the hydrolysis of succinyl-CoA to the synthesis of either ATP or GTP and thus represents the only step of substrate-level phosphorylation in the TCA. The beta subunit provides nucleotide specificity of the enzyme and binds the substrate succinate, while the binding sites for coenzyme A and phosphate are found in the alpha subunit.</text>
</comment>
<comment type="catalytic activity">
    <reaction evidence="1">
        <text>succinate + ATP + CoA = succinyl-CoA + ADP + phosphate</text>
        <dbReference type="Rhea" id="RHEA:17661"/>
        <dbReference type="ChEBI" id="CHEBI:30031"/>
        <dbReference type="ChEBI" id="CHEBI:30616"/>
        <dbReference type="ChEBI" id="CHEBI:43474"/>
        <dbReference type="ChEBI" id="CHEBI:57287"/>
        <dbReference type="ChEBI" id="CHEBI:57292"/>
        <dbReference type="ChEBI" id="CHEBI:456216"/>
        <dbReference type="EC" id="6.2.1.5"/>
    </reaction>
    <physiologicalReaction direction="right-to-left" evidence="1">
        <dbReference type="Rhea" id="RHEA:17663"/>
    </physiologicalReaction>
</comment>
<comment type="catalytic activity">
    <reaction evidence="1">
        <text>GTP + succinate + CoA = succinyl-CoA + GDP + phosphate</text>
        <dbReference type="Rhea" id="RHEA:22120"/>
        <dbReference type="ChEBI" id="CHEBI:30031"/>
        <dbReference type="ChEBI" id="CHEBI:37565"/>
        <dbReference type="ChEBI" id="CHEBI:43474"/>
        <dbReference type="ChEBI" id="CHEBI:57287"/>
        <dbReference type="ChEBI" id="CHEBI:57292"/>
        <dbReference type="ChEBI" id="CHEBI:58189"/>
    </reaction>
    <physiologicalReaction direction="right-to-left" evidence="1">
        <dbReference type="Rhea" id="RHEA:22122"/>
    </physiologicalReaction>
</comment>
<comment type="cofactor">
    <cofactor evidence="1">
        <name>Mg(2+)</name>
        <dbReference type="ChEBI" id="CHEBI:18420"/>
    </cofactor>
    <text evidence="1">Binds 1 Mg(2+) ion per subunit.</text>
</comment>
<comment type="pathway">
    <text evidence="1">Carbohydrate metabolism; tricarboxylic acid cycle; succinate from succinyl-CoA (ligase route): step 1/1.</text>
</comment>
<comment type="subunit">
    <text evidence="1">Heterotetramer of two alpha and two beta subunits.</text>
</comment>
<comment type="similarity">
    <text evidence="1">Belongs to the succinate/malate CoA ligase beta subunit family.</text>
</comment>
<dbReference type="EC" id="6.2.1.5" evidence="1"/>
<dbReference type="EMBL" id="CP000539">
    <property type="protein sequence ID" value="ABM44151.1"/>
    <property type="molecule type" value="Genomic_DNA"/>
</dbReference>
<dbReference type="SMR" id="A1WD26"/>
<dbReference type="STRING" id="232721.Ajs_4047"/>
<dbReference type="KEGG" id="ajs:Ajs_4047"/>
<dbReference type="eggNOG" id="COG0045">
    <property type="taxonomic scope" value="Bacteria"/>
</dbReference>
<dbReference type="HOGENOM" id="CLU_037430_0_2_4"/>
<dbReference type="UniPathway" id="UPA00223">
    <property type="reaction ID" value="UER00999"/>
</dbReference>
<dbReference type="Proteomes" id="UP000000645">
    <property type="component" value="Chromosome"/>
</dbReference>
<dbReference type="GO" id="GO:0005829">
    <property type="term" value="C:cytosol"/>
    <property type="evidence" value="ECO:0007669"/>
    <property type="project" value="TreeGrafter"/>
</dbReference>
<dbReference type="GO" id="GO:0042709">
    <property type="term" value="C:succinate-CoA ligase complex"/>
    <property type="evidence" value="ECO:0007669"/>
    <property type="project" value="TreeGrafter"/>
</dbReference>
<dbReference type="GO" id="GO:0005524">
    <property type="term" value="F:ATP binding"/>
    <property type="evidence" value="ECO:0007669"/>
    <property type="project" value="UniProtKB-UniRule"/>
</dbReference>
<dbReference type="GO" id="GO:0000287">
    <property type="term" value="F:magnesium ion binding"/>
    <property type="evidence" value="ECO:0007669"/>
    <property type="project" value="UniProtKB-UniRule"/>
</dbReference>
<dbReference type="GO" id="GO:0004775">
    <property type="term" value="F:succinate-CoA ligase (ADP-forming) activity"/>
    <property type="evidence" value="ECO:0007669"/>
    <property type="project" value="UniProtKB-UniRule"/>
</dbReference>
<dbReference type="GO" id="GO:0004776">
    <property type="term" value="F:succinate-CoA ligase (GDP-forming) activity"/>
    <property type="evidence" value="ECO:0007669"/>
    <property type="project" value="RHEA"/>
</dbReference>
<dbReference type="GO" id="GO:0006104">
    <property type="term" value="P:succinyl-CoA metabolic process"/>
    <property type="evidence" value="ECO:0007669"/>
    <property type="project" value="TreeGrafter"/>
</dbReference>
<dbReference type="GO" id="GO:0006099">
    <property type="term" value="P:tricarboxylic acid cycle"/>
    <property type="evidence" value="ECO:0007669"/>
    <property type="project" value="UniProtKB-UniRule"/>
</dbReference>
<dbReference type="FunFam" id="3.30.1490.20:FF:000002">
    <property type="entry name" value="Succinate--CoA ligase [ADP-forming] subunit beta"/>
    <property type="match status" value="1"/>
</dbReference>
<dbReference type="FunFam" id="3.30.470.20:FF:000002">
    <property type="entry name" value="Succinate--CoA ligase [ADP-forming] subunit beta"/>
    <property type="match status" value="1"/>
</dbReference>
<dbReference type="FunFam" id="3.40.50.261:FF:000001">
    <property type="entry name" value="Succinate--CoA ligase [ADP-forming] subunit beta"/>
    <property type="match status" value="1"/>
</dbReference>
<dbReference type="Gene3D" id="3.30.1490.20">
    <property type="entry name" value="ATP-grasp fold, A domain"/>
    <property type="match status" value="1"/>
</dbReference>
<dbReference type="Gene3D" id="3.30.470.20">
    <property type="entry name" value="ATP-grasp fold, B domain"/>
    <property type="match status" value="1"/>
</dbReference>
<dbReference type="Gene3D" id="3.40.50.261">
    <property type="entry name" value="Succinyl-CoA synthetase domains"/>
    <property type="match status" value="1"/>
</dbReference>
<dbReference type="HAMAP" id="MF_00558">
    <property type="entry name" value="Succ_CoA_beta"/>
    <property type="match status" value="1"/>
</dbReference>
<dbReference type="InterPro" id="IPR011761">
    <property type="entry name" value="ATP-grasp"/>
</dbReference>
<dbReference type="InterPro" id="IPR013650">
    <property type="entry name" value="ATP-grasp_succ-CoA_synth-type"/>
</dbReference>
<dbReference type="InterPro" id="IPR013815">
    <property type="entry name" value="ATP_grasp_subdomain_1"/>
</dbReference>
<dbReference type="InterPro" id="IPR017866">
    <property type="entry name" value="Succ-CoA_synthase_bsu_CS"/>
</dbReference>
<dbReference type="InterPro" id="IPR005811">
    <property type="entry name" value="SUCC_ACL_C"/>
</dbReference>
<dbReference type="InterPro" id="IPR005809">
    <property type="entry name" value="Succ_CoA_ligase-like_bsu"/>
</dbReference>
<dbReference type="InterPro" id="IPR016102">
    <property type="entry name" value="Succinyl-CoA_synth-like"/>
</dbReference>
<dbReference type="NCBIfam" id="NF001913">
    <property type="entry name" value="PRK00696.1"/>
    <property type="match status" value="1"/>
</dbReference>
<dbReference type="NCBIfam" id="TIGR01016">
    <property type="entry name" value="sucCoAbeta"/>
    <property type="match status" value="1"/>
</dbReference>
<dbReference type="PANTHER" id="PTHR11815:SF10">
    <property type="entry name" value="SUCCINATE--COA LIGASE [GDP-FORMING] SUBUNIT BETA, MITOCHONDRIAL"/>
    <property type="match status" value="1"/>
</dbReference>
<dbReference type="PANTHER" id="PTHR11815">
    <property type="entry name" value="SUCCINYL-COA SYNTHETASE BETA CHAIN"/>
    <property type="match status" value="1"/>
</dbReference>
<dbReference type="Pfam" id="PF08442">
    <property type="entry name" value="ATP-grasp_2"/>
    <property type="match status" value="1"/>
</dbReference>
<dbReference type="Pfam" id="PF00549">
    <property type="entry name" value="Ligase_CoA"/>
    <property type="match status" value="1"/>
</dbReference>
<dbReference type="PIRSF" id="PIRSF001554">
    <property type="entry name" value="SucCS_beta"/>
    <property type="match status" value="1"/>
</dbReference>
<dbReference type="SUPFAM" id="SSF56059">
    <property type="entry name" value="Glutathione synthetase ATP-binding domain-like"/>
    <property type="match status" value="1"/>
</dbReference>
<dbReference type="SUPFAM" id="SSF52210">
    <property type="entry name" value="Succinyl-CoA synthetase domains"/>
    <property type="match status" value="1"/>
</dbReference>
<dbReference type="PROSITE" id="PS50975">
    <property type="entry name" value="ATP_GRASP"/>
    <property type="match status" value="1"/>
</dbReference>
<dbReference type="PROSITE" id="PS01217">
    <property type="entry name" value="SUCCINYL_COA_LIG_3"/>
    <property type="match status" value="1"/>
</dbReference>
<protein>
    <recommendedName>
        <fullName evidence="1">Succinate--CoA ligase [ADP-forming] subunit beta</fullName>
        <ecNumber evidence="1">6.2.1.5</ecNumber>
    </recommendedName>
    <alternativeName>
        <fullName evidence="1">Succinyl-CoA synthetase subunit beta</fullName>
        <shortName evidence="1">SCS-beta</shortName>
    </alternativeName>
</protein>
<proteinExistence type="inferred from homology"/>
<reference key="1">
    <citation type="submission" date="2006-12" db="EMBL/GenBank/DDBJ databases">
        <title>Complete sequence of chromosome 1 of Acidovorax sp. JS42.</title>
        <authorList>
            <person name="Copeland A."/>
            <person name="Lucas S."/>
            <person name="Lapidus A."/>
            <person name="Barry K."/>
            <person name="Detter J.C."/>
            <person name="Glavina del Rio T."/>
            <person name="Dalin E."/>
            <person name="Tice H."/>
            <person name="Pitluck S."/>
            <person name="Chertkov O."/>
            <person name="Brettin T."/>
            <person name="Bruce D."/>
            <person name="Han C."/>
            <person name="Tapia R."/>
            <person name="Gilna P."/>
            <person name="Schmutz J."/>
            <person name="Larimer F."/>
            <person name="Land M."/>
            <person name="Hauser L."/>
            <person name="Kyrpides N."/>
            <person name="Kim E."/>
            <person name="Stahl D."/>
            <person name="Richardson P."/>
        </authorList>
    </citation>
    <scope>NUCLEOTIDE SEQUENCE [LARGE SCALE GENOMIC DNA]</scope>
    <source>
        <strain>JS42</strain>
    </source>
</reference>
<gene>
    <name evidence="1" type="primary">sucC</name>
    <name type="ordered locus">Ajs_4047</name>
</gene>
<organism>
    <name type="scientific">Acidovorax sp. (strain JS42)</name>
    <dbReference type="NCBI Taxonomy" id="232721"/>
    <lineage>
        <taxon>Bacteria</taxon>
        <taxon>Pseudomonadati</taxon>
        <taxon>Pseudomonadota</taxon>
        <taxon>Betaproteobacteria</taxon>
        <taxon>Burkholderiales</taxon>
        <taxon>Comamonadaceae</taxon>
        <taxon>Acidovorax</taxon>
    </lineage>
</organism>
<name>SUCC_ACISJ</name>
<sequence length="386" mass="41051">MKIHEYQGKEILRSFGVPVPRGIPAFTVQEAVEAAQKLGGPVWVVKAQIHAGGRGKGGGVKVAKTIDDVKARASEILGMQLVTHQTGPEGQKVRRLYIEDGADIKNELYVSLVTDRGTQKVALIASSEGGMDIEEVAHSTPEKIITEMIDPLTGITPEQSKKVAAAIGLTGASVDQAVDLFAKLYKCYMDTDASLVEINPLNCDSKGNLMALDAKFNFDANALFRHPEIVALRDLDEEDPAEVEASKFDLAYISLDGNIGCLVNGAGLAMATMDTIKLFGGEPANFLDVGGGATPEKVTEAFKIMLKNPKVKGILVNIFGGIMKCDTIATGVITACKAVNLQVPLVVRMKGTNEELGKKMLAESGLPIISADTMAEAATKIVEAVR</sequence>
<accession>A1WD26</accession>
<keyword id="KW-0067">ATP-binding</keyword>
<keyword id="KW-0436">Ligase</keyword>
<keyword id="KW-0460">Magnesium</keyword>
<keyword id="KW-0479">Metal-binding</keyword>
<keyword id="KW-0547">Nucleotide-binding</keyword>
<keyword id="KW-0816">Tricarboxylic acid cycle</keyword>
<evidence type="ECO:0000255" key="1">
    <source>
        <dbReference type="HAMAP-Rule" id="MF_00558"/>
    </source>
</evidence>
<feature type="chain" id="PRO_1000081989" description="Succinate--CoA ligase [ADP-forming] subunit beta">
    <location>
        <begin position="1"/>
        <end position="386"/>
    </location>
</feature>
<feature type="domain" description="ATP-grasp" evidence="1">
    <location>
        <begin position="9"/>
        <end position="244"/>
    </location>
</feature>
<feature type="binding site" evidence="1">
    <location>
        <position position="46"/>
    </location>
    <ligand>
        <name>ATP</name>
        <dbReference type="ChEBI" id="CHEBI:30616"/>
    </ligand>
</feature>
<feature type="binding site" evidence="1">
    <location>
        <begin position="53"/>
        <end position="55"/>
    </location>
    <ligand>
        <name>ATP</name>
        <dbReference type="ChEBI" id="CHEBI:30616"/>
    </ligand>
</feature>
<feature type="binding site" evidence="1">
    <location>
        <position position="99"/>
    </location>
    <ligand>
        <name>ATP</name>
        <dbReference type="ChEBI" id="CHEBI:30616"/>
    </ligand>
</feature>
<feature type="binding site" evidence="1">
    <location>
        <position position="102"/>
    </location>
    <ligand>
        <name>ATP</name>
        <dbReference type="ChEBI" id="CHEBI:30616"/>
    </ligand>
</feature>
<feature type="binding site" evidence="1">
    <location>
        <position position="107"/>
    </location>
    <ligand>
        <name>ATP</name>
        <dbReference type="ChEBI" id="CHEBI:30616"/>
    </ligand>
</feature>
<feature type="binding site" evidence="1">
    <location>
        <position position="199"/>
    </location>
    <ligand>
        <name>Mg(2+)</name>
        <dbReference type="ChEBI" id="CHEBI:18420"/>
    </ligand>
</feature>
<feature type="binding site" evidence="1">
    <location>
        <position position="213"/>
    </location>
    <ligand>
        <name>Mg(2+)</name>
        <dbReference type="ChEBI" id="CHEBI:18420"/>
    </ligand>
</feature>
<feature type="binding site" evidence="1">
    <location>
        <position position="264"/>
    </location>
    <ligand>
        <name>substrate</name>
        <note>ligand shared with subunit alpha</note>
    </ligand>
</feature>
<feature type="binding site" evidence="1">
    <location>
        <begin position="321"/>
        <end position="323"/>
    </location>
    <ligand>
        <name>substrate</name>
        <note>ligand shared with subunit alpha</note>
    </ligand>
</feature>